<comment type="subcellular location">
    <subcellularLocation>
        <location evidence="2">Cell membrane</location>
        <topology evidence="1">Multi-pass membrane protein</topology>
    </subcellularLocation>
</comment>
<comment type="similarity">
    <text evidence="2">Belongs to the binding-protein-dependent transport system permease family. MalFG subfamily.</text>
</comment>
<accession>P40980</accession>
<protein>
    <recommendedName>
        <fullName>Putative ABC transporter permease protein ORF2</fullName>
    </recommendedName>
</protein>
<sequence length="275" mass="30858">MSFIKETKKWYFIFLAVWTLIADVPFLFMLFTSFKTQSELLSGNTWQIPRQPTIGNFSTVLEGNFFTYLKNSVIAVSISVVLILIISSMAAFAFSRFKFALNNLLYSLIIAGMAIPIHVTLIPIYVLTNKIKLYDTVFALIGPYVALSLPMSIFILTEFMREIPLELEEAAKIDGCSMFRLYSDILLPLSAPALITVGIYNGTYLWNEFVFALVLTSSPTRRTLPLGIWDFQARYGSDIPAIMAFLTLSLLPMLIAYIFGQDKIIKGMMAGAVKG</sequence>
<name>YOR2_CALSR</name>
<keyword id="KW-1003">Cell membrane</keyword>
<keyword id="KW-0472">Membrane</keyword>
<keyword id="KW-0812">Transmembrane</keyword>
<keyword id="KW-1133">Transmembrane helix</keyword>
<keyword id="KW-0813">Transport</keyword>
<evidence type="ECO:0000255" key="1">
    <source>
        <dbReference type="PROSITE-ProRule" id="PRU00441"/>
    </source>
</evidence>
<evidence type="ECO:0000305" key="2"/>
<organism>
    <name type="scientific">Caldicellulosiruptor sp. (strain Rt8B.4)</name>
    <dbReference type="NCBI Taxonomy" id="28238"/>
    <lineage>
        <taxon>Bacteria</taxon>
        <taxon>Bacillati</taxon>
        <taxon>Bacillota</taxon>
        <taxon>Bacillota incertae sedis</taxon>
        <taxon>Caldicellulosiruptorales</taxon>
        <taxon>Caldicellulosiruptoraceae</taxon>
        <taxon>Caldicellulosiruptor</taxon>
    </lineage>
</organism>
<dbReference type="EMBL" id="L18965">
    <property type="protein sequence ID" value="AAB42042.1"/>
    <property type="molecule type" value="Genomic_DNA"/>
</dbReference>
<dbReference type="PIR" id="S41786">
    <property type="entry name" value="S41786"/>
</dbReference>
<dbReference type="SMR" id="P40980"/>
<dbReference type="GO" id="GO:0005886">
    <property type="term" value="C:plasma membrane"/>
    <property type="evidence" value="ECO:0007669"/>
    <property type="project" value="UniProtKB-SubCell"/>
</dbReference>
<dbReference type="GO" id="GO:0055085">
    <property type="term" value="P:transmembrane transport"/>
    <property type="evidence" value="ECO:0007669"/>
    <property type="project" value="InterPro"/>
</dbReference>
<dbReference type="CDD" id="cd06261">
    <property type="entry name" value="TM_PBP2"/>
    <property type="match status" value="1"/>
</dbReference>
<dbReference type="Gene3D" id="1.10.3720.10">
    <property type="entry name" value="MetI-like"/>
    <property type="match status" value="1"/>
</dbReference>
<dbReference type="InterPro" id="IPR000515">
    <property type="entry name" value="MetI-like"/>
</dbReference>
<dbReference type="InterPro" id="IPR035906">
    <property type="entry name" value="MetI-like_sf"/>
</dbReference>
<dbReference type="PANTHER" id="PTHR43744:SF12">
    <property type="entry name" value="ABC TRANSPORTER PERMEASE PROTEIN MG189-RELATED"/>
    <property type="match status" value="1"/>
</dbReference>
<dbReference type="PANTHER" id="PTHR43744">
    <property type="entry name" value="ABC TRANSPORTER PERMEASE PROTEIN MG189-RELATED-RELATED"/>
    <property type="match status" value="1"/>
</dbReference>
<dbReference type="Pfam" id="PF00528">
    <property type="entry name" value="BPD_transp_1"/>
    <property type="match status" value="1"/>
</dbReference>
<dbReference type="SUPFAM" id="SSF161098">
    <property type="entry name" value="MetI-like"/>
    <property type="match status" value="1"/>
</dbReference>
<dbReference type="PROSITE" id="PS50928">
    <property type="entry name" value="ABC_TM1"/>
    <property type="match status" value="1"/>
</dbReference>
<reference key="1">
    <citation type="journal article" date="1996" name="Appl. Microbiol. Biotechnol.">
        <title>Cloning, sequencing and overexpression in Escherichia coli of a xylanase gene, xynA from the thermophilic bacterium Rt8B.4 genus Caldicellulosiruptor.</title>
        <authorList>
            <person name="Dwivedi P.P."/>
            <person name="Gibbs M.D."/>
            <person name="Saul D.J."/>
            <person name="Bergquist P.L."/>
        </authorList>
    </citation>
    <scope>NUCLEOTIDE SEQUENCE [GENOMIC DNA]</scope>
</reference>
<proteinExistence type="inferred from homology"/>
<feature type="chain" id="PRO_0000060303" description="Putative ABC transporter permease protein ORF2">
    <location>
        <begin position="1"/>
        <end position="275"/>
    </location>
</feature>
<feature type="transmembrane region" description="Helical" evidence="1">
    <location>
        <begin position="11"/>
        <end position="31"/>
    </location>
</feature>
<feature type="transmembrane region" description="Helical" evidence="1">
    <location>
        <begin position="74"/>
        <end position="94"/>
    </location>
</feature>
<feature type="transmembrane region" description="Helical" evidence="1">
    <location>
        <begin position="108"/>
        <end position="128"/>
    </location>
</feature>
<feature type="transmembrane region" description="Helical" evidence="1">
    <location>
        <begin position="136"/>
        <end position="156"/>
    </location>
</feature>
<feature type="transmembrane region" description="Helical" evidence="1">
    <location>
        <begin position="185"/>
        <end position="205"/>
    </location>
</feature>
<feature type="transmembrane region" description="Helical" evidence="1">
    <location>
        <begin position="239"/>
        <end position="259"/>
    </location>
</feature>
<feature type="domain" description="ABC transmembrane type-1" evidence="1">
    <location>
        <begin position="69"/>
        <end position="260"/>
    </location>
</feature>